<proteinExistence type="inferred from homology"/>
<keyword id="KW-0012">Acyltransferase</keyword>
<keyword id="KW-0963">Cytoplasm</keyword>
<keyword id="KW-0808">Transferase</keyword>
<name>LFTR_ECODH</name>
<accession>B1X825</accession>
<reference key="1">
    <citation type="journal article" date="2008" name="J. Bacteriol.">
        <title>The complete genome sequence of Escherichia coli DH10B: insights into the biology of a laboratory workhorse.</title>
        <authorList>
            <person name="Durfee T."/>
            <person name="Nelson R."/>
            <person name="Baldwin S."/>
            <person name="Plunkett G. III"/>
            <person name="Burland V."/>
            <person name="Mau B."/>
            <person name="Petrosino J.F."/>
            <person name="Qin X."/>
            <person name="Muzny D.M."/>
            <person name="Ayele M."/>
            <person name="Gibbs R.A."/>
            <person name="Csorgo B."/>
            <person name="Posfai G."/>
            <person name="Weinstock G.M."/>
            <person name="Blattner F.R."/>
        </authorList>
    </citation>
    <scope>NUCLEOTIDE SEQUENCE [LARGE SCALE GENOMIC DNA]</scope>
    <source>
        <strain>K12 / DH10B</strain>
    </source>
</reference>
<sequence>MRLVQLSRHSIAFPSPEGALREPNGLLALGGDLSPARLLMAYQRGIFPWFSPGDPILWWSPDPRAVLWPESLHISRSMKRFHKRSPYRVTMNYAFGQVIEGCASDREEGTWITRGVVEAYHRLHELGHAHSIEVWREDELVGGMYGVAQGTLFCGESMFSRMENASKTALLVFCEEFIGHGGKLIDCQVLNDHTASLGACEIPRRDYLNYLNQMRLGRLPNNFWVPRCLFSPQE</sequence>
<gene>
    <name evidence="1" type="primary">aat</name>
    <name type="ordered locus">ECDH10B_0955</name>
</gene>
<comment type="function">
    <text evidence="1">Functions in the N-end rule pathway of protein degradation where it conjugates Leu, Phe and, less efficiently, Met from aminoacyl-tRNAs to the N-termini of proteins containing an N-terminal arginine or lysine.</text>
</comment>
<comment type="catalytic activity">
    <reaction evidence="1">
        <text>N-terminal L-lysyl-[protein] + L-leucyl-tRNA(Leu) = N-terminal L-leucyl-L-lysyl-[protein] + tRNA(Leu) + H(+)</text>
        <dbReference type="Rhea" id="RHEA:12340"/>
        <dbReference type="Rhea" id="RHEA-COMP:9613"/>
        <dbReference type="Rhea" id="RHEA-COMP:9622"/>
        <dbReference type="Rhea" id="RHEA-COMP:12670"/>
        <dbReference type="Rhea" id="RHEA-COMP:12671"/>
        <dbReference type="ChEBI" id="CHEBI:15378"/>
        <dbReference type="ChEBI" id="CHEBI:65249"/>
        <dbReference type="ChEBI" id="CHEBI:78442"/>
        <dbReference type="ChEBI" id="CHEBI:78494"/>
        <dbReference type="ChEBI" id="CHEBI:133043"/>
        <dbReference type="EC" id="2.3.2.6"/>
    </reaction>
</comment>
<comment type="catalytic activity">
    <reaction evidence="1">
        <text>N-terminal L-arginyl-[protein] + L-leucyl-tRNA(Leu) = N-terminal L-leucyl-L-arginyl-[protein] + tRNA(Leu) + H(+)</text>
        <dbReference type="Rhea" id="RHEA:50416"/>
        <dbReference type="Rhea" id="RHEA-COMP:9613"/>
        <dbReference type="Rhea" id="RHEA-COMP:9622"/>
        <dbReference type="Rhea" id="RHEA-COMP:12672"/>
        <dbReference type="Rhea" id="RHEA-COMP:12673"/>
        <dbReference type="ChEBI" id="CHEBI:15378"/>
        <dbReference type="ChEBI" id="CHEBI:64719"/>
        <dbReference type="ChEBI" id="CHEBI:78442"/>
        <dbReference type="ChEBI" id="CHEBI:78494"/>
        <dbReference type="ChEBI" id="CHEBI:133044"/>
        <dbReference type="EC" id="2.3.2.6"/>
    </reaction>
</comment>
<comment type="catalytic activity">
    <reaction evidence="1">
        <text>L-phenylalanyl-tRNA(Phe) + an N-terminal L-alpha-aminoacyl-[protein] = an N-terminal L-phenylalanyl-L-alpha-aminoacyl-[protein] + tRNA(Phe)</text>
        <dbReference type="Rhea" id="RHEA:43632"/>
        <dbReference type="Rhea" id="RHEA-COMP:9668"/>
        <dbReference type="Rhea" id="RHEA-COMP:9699"/>
        <dbReference type="Rhea" id="RHEA-COMP:10636"/>
        <dbReference type="Rhea" id="RHEA-COMP:10637"/>
        <dbReference type="ChEBI" id="CHEBI:78442"/>
        <dbReference type="ChEBI" id="CHEBI:78531"/>
        <dbReference type="ChEBI" id="CHEBI:78597"/>
        <dbReference type="ChEBI" id="CHEBI:83561"/>
        <dbReference type="EC" id="2.3.2.6"/>
    </reaction>
</comment>
<comment type="subcellular location">
    <subcellularLocation>
        <location evidence="1">Cytoplasm</location>
    </subcellularLocation>
</comment>
<comment type="similarity">
    <text evidence="1">Belongs to the L/F-transferase family.</text>
</comment>
<protein>
    <recommendedName>
        <fullName evidence="1">Leucyl/phenylalanyl-tRNA--protein transferase</fullName>
        <ecNumber evidence="1">2.3.2.6</ecNumber>
    </recommendedName>
    <alternativeName>
        <fullName evidence="1">L/F-transferase</fullName>
    </alternativeName>
    <alternativeName>
        <fullName evidence="1">Leucyltransferase</fullName>
    </alternativeName>
    <alternativeName>
        <fullName evidence="1">Phenyalanyltransferase</fullName>
    </alternativeName>
</protein>
<feature type="chain" id="PRO_1000131922" description="Leucyl/phenylalanyl-tRNA--protein transferase">
    <location>
        <begin position="1"/>
        <end position="234"/>
    </location>
</feature>
<evidence type="ECO:0000255" key="1">
    <source>
        <dbReference type="HAMAP-Rule" id="MF_00688"/>
    </source>
</evidence>
<organism>
    <name type="scientific">Escherichia coli (strain K12 / DH10B)</name>
    <dbReference type="NCBI Taxonomy" id="316385"/>
    <lineage>
        <taxon>Bacteria</taxon>
        <taxon>Pseudomonadati</taxon>
        <taxon>Pseudomonadota</taxon>
        <taxon>Gammaproteobacteria</taxon>
        <taxon>Enterobacterales</taxon>
        <taxon>Enterobacteriaceae</taxon>
        <taxon>Escherichia</taxon>
    </lineage>
</organism>
<dbReference type="EC" id="2.3.2.6" evidence="1"/>
<dbReference type="EMBL" id="CP000948">
    <property type="protein sequence ID" value="ACB02085.1"/>
    <property type="molecule type" value="Genomic_DNA"/>
</dbReference>
<dbReference type="RefSeq" id="WP_001241678.1">
    <property type="nucleotide sequence ID" value="NC_010473.1"/>
</dbReference>
<dbReference type="SMR" id="B1X825"/>
<dbReference type="GeneID" id="75206174"/>
<dbReference type="KEGG" id="ecd:ECDH10B_0955"/>
<dbReference type="HOGENOM" id="CLU_075045_0_0_6"/>
<dbReference type="GO" id="GO:0005737">
    <property type="term" value="C:cytoplasm"/>
    <property type="evidence" value="ECO:0007669"/>
    <property type="project" value="UniProtKB-SubCell"/>
</dbReference>
<dbReference type="GO" id="GO:0008914">
    <property type="term" value="F:leucyl-tRNA--protein transferase activity"/>
    <property type="evidence" value="ECO:0007669"/>
    <property type="project" value="UniProtKB-UniRule"/>
</dbReference>
<dbReference type="GO" id="GO:0030163">
    <property type="term" value="P:protein catabolic process"/>
    <property type="evidence" value="ECO:0007669"/>
    <property type="project" value="UniProtKB-UniRule"/>
</dbReference>
<dbReference type="FunFam" id="3.30.70.3550:FF:000001">
    <property type="entry name" value="Leucyl/phenylalanyl-tRNA--protein transferase"/>
    <property type="match status" value="1"/>
</dbReference>
<dbReference type="FunFam" id="3.40.630.70:FF:000001">
    <property type="entry name" value="Leucyl/phenylalanyl-tRNA--protein transferase"/>
    <property type="match status" value="1"/>
</dbReference>
<dbReference type="Gene3D" id="3.40.630.70">
    <property type="entry name" value="Leucyl/phenylalanyl-tRNA-protein transferase, C-terminal domain"/>
    <property type="match status" value="1"/>
</dbReference>
<dbReference type="Gene3D" id="3.30.70.3550">
    <property type="entry name" value="Leucyl/phenylalanyl-tRNA-protein transferase, N-terminal domain"/>
    <property type="match status" value="1"/>
</dbReference>
<dbReference type="HAMAP" id="MF_00688">
    <property type="entry name" value="Leu_Phe_trans"/>
    <property type="match status" value="1"/>
</dbReference>
<dbReference type="InterPro" id="IPR016181">
    <property type="entry name" value="Acyl_CoA_acyltransferase"/>
</dbReference>
<dbReference type="InterPro" id="IPR004616">
    <property type="entry name" value="Leu/Phe-tRNA_Trfase"/>
</dbReference>
<dbReference type="InterPro" id="IPR042203">
    <property type="entry name" value="Leu/Phe-tRNA_Trfase_C"/>
</dbReference>
<dbReference type="InterPro" id="IPR042221">
    <property type="entry name" value="Leu/Phe-tRNA_Trfase_N"/>
</dbReference>
<dbReference type="NCBIfam" id="TIGR00667">
    <property type="entry name" value="aat"/>
    <property type="match status" value="1"/>
</dbReference>
<dbReference type="PANTHER" id="PTHR30098">
    <property type="entry name" value="LEUCYL/PHENYLALANYL-TRNA--PROTEIN TRANSFERASE"/>
    <property type="match status" value="1"/>
</dbReference>
<dbReference type="PANTHER" id="PTHR30098:SF2">
    <property type="entry name" value="LEUCYL_PHENYLALANYL-TRNA--PROTEIN TRANSFERASE"/>
    <property type="match status" value="1"/>
</dbReference>
<dbReference type="Pfam" id="PF03588">
    <property type="entry name" value="Leu_Phe_trans"/>
    <property type="match status" value="1"/>
</dbReference>
<dbReference type="SUPFAM" id="SSF55729">
    <property type="entry name" value="Acyl-CoA N-acyltransferases (Nat)"/>
    <property type="match status" value="1"/>
</dbReference>